<keyword id="KW-0227">DNA damage</keyword>
<keyword id="KW-0234">DNA repair</keyword>
<organism>
    <name type="scientific">Clostridium botulinum (strain Langeland / NCTC 10281 / Type F)</name>
    <dbReference type="NCBI Taxonomy" id="441772"/>
    <lineage>
        <taxon>Bacteria</taxon>
        <taxon>Bacillati</taxon>
        <taxon>Bacillota</taxon>
        <taxon>Clostridia</taxon>
        <taxon>Eubacteriales</taxon>
        <taxon>Clostridiaceae</taxon>
        <taxon>Clostridium</taxon>
    </lineage>
</organism>
<dbReference type="EMBL" id="CP000728">
    <property type="protein sequence ID" value="ABS39872.1"/>
    <property type="molecule type" value="Genomic_DNA"/>
</dbReference>
<dbReference type="RefSeq" id="WP_012099792.1">
    <property type="nucleotide sequence ID" value="NC_009699.1"/>
</dbReference>
<dbReference type="SMR" id="A7GE44"/>
<dbReference type="KEGG" id="cbf:CLI_1794"/>
<dbReference type="HOGENOM" id="CLU_004131_4_1_9"/>
<dbReference type="Proteomes" id="UP000002410">
    <property type="component" value="Chromosome"/>
</dbReference>
<dbReference type="GO" id="GO:0032300">
    <property type="term" value="C:mismatch repair complex"/>
    <property type="evidence" value="ECO:0007669"/>
    <property type="project" value="InterPro"/>
</dbReference>
<dbReference type="GO" id="GO:0005524">
    <property type="term" value="F:ATP binding"/>
    <property type="evidence" value="ECO:0007669"/>
    <property type="project" value="InterPro"/>
</dbReference>
<dbReference type="GO" id="GO:0016887">
    <property type="term" value="F:ATP hydrolysis activity"/>
    <property type="evidence" value="ECO:0007669"/>
    <property type="project" value="InterPro"/>
</dbReference>
<dbReference type="GO" id="GO:0140664">
    <property type="term" value="F:ATP-dependent DNA damage sensor activity"/>
    <property type="evidence" value="ECO:0007669"/>
    <property type="project" value="InterPro"/>
</dbReference>
<dbReference type="GO" id="GO:0030983">
    <property type="term" value="F:mismatched DNA binding"/>
    <property type="evidence" value="ECO:0007669"/>
    <property type="project" value="InterPro"/>
</dbReference>
<dbReference type="GO" id="GO:0006298">
    <property type="term" value="P:mismatch repair"/>
    <property type="evidence" value="ECO:0007669"/>
    <property type="project" value="UniProtKB-UniRule"/>
</dbReference>
<dbReference type="CDD" id="cd16926">
    <property type="entry name" value="HATPase_MutL-MLH-PMS-like"/>
    <property type="match status" value="1"/>
</dbReference>
<dbReference type="CDD" id="cd00782">
    <property type="entry name" value="MutL_Trans"/>
    <property type="match status" value="1"/>
</dbReference>
<dbReference type="FunFam" id="3.30.565.10:FF:000003">
    <property type="entry name" value="DNA mismatch repair endonuclease MutL"/>
    <property type="match status" value="1"/>
</dbReference>
<dbReference type="Gene3D" id="3.30.230.10">
    <property type="match status" value="1"/>
</dbReference>
<dbReference type="Gene3D" id="3.30.565.10">
    <property type="entry name" value="Histidine kinase-like ATPase, C-terminal domain"/>
    <property type="match status" value="1"/>
</dbReference>
<dbReference type="Gene3D" id="3.30.1540.20">
    <property type="entry name" value="MutL, C-terminal domain, dimerisation subdomain"/>
    <property type="match status" value="1"/>
</dbReference>
<dbReference type="Gene3D" id="3.30.1370.100">
    <property type="entry name" value="MutL, C-terminal domain, regulatory subdomain"/>
    <property type="match status" value="1"/>
</dbReference>
<dbReference type="HAMAP" id="MF_00149">
    <property type="entry name" value="DNA_mis_repair"/>
    <property type="match status" value="1"/>
</dbReference>
<dbReference type="InterPro" id="IPR014762">
    <property type="entry name" value="DNA_mismatch_repair_CS"/>
</dbReference>
<dbReference type="InterPro" id="IPR020667">
    <property type="entry name" value="DNA_mismatch_repair_MutL"/>
</dbReference>
<dbReference type="InterPro" id="IPR013507">
    <property type="entry name" value="DNA_mismatch_S5_2-like"/>
</dbReference>
<dbReference type="InterPro" id="IPR036890">
    <property type="entry name" value="HATPase_C_sf"/>
</dbReference>
<dbReference type="InterPro" id="IPR002099">
    <property type="entry name" value="MutL/Mlh/PMS"/>
</dbReference>
<dbReference type="InterPro" id="IPR038973">
    <property type="entry name" value="MutL/Mlh/Pms-like"/>
</dbReference>
<dbReference type="InterPro" id="IPR014790">
    <property type="entry name" value="MutL_C"/>
</dbReference>
<dbReference type="InterPro" id="IPR042120">
    <property type="entry name" value="MutL_C_dimsub"/>
</dbReference>
<dbReference type="InterPro" id="IPR042121">
    <property type="entry name" value="MutL_C_regsub"/>
</dbReference>
<dbReference type="InterPro" id="IPR037198">
    <property type="entry name" value="MutL_C_sf"/>
</dbReference>
<dbReference type="InterPro" id="IPR020568">
    <property type="entry name" value="Ribosomal_Su5_D2-typ_SF"/>
</dbReference>
<dbReference type="InterPro" id="IPR014721">
    <property type="entry name" value="Ribsml_uS5_D2-typ_fold_subgr"/>
</dbReference>
<dbReference type="NCBIfam" id="TIGR00585">
    <property type="entry name" value="mutl"/>
    <property type="match status" value="1"/>
</dbReference>
<dbReference type="PANTHER" id="PTHR10073">
    <property type="entry name" value="DNA MISMATCH REPAIR PROTEIN MLH, PMS, MUTL"/>
    <property type="match status" value="1"/>
</dbReference>
<dbReference type="PANTHER" id="PTHR10073:SF12">
    <property type="entry name" value="DNA MISMATCH REPAIR PROTEIN MLH1"/>
    <property type="match status" value="1"/>
</dbReference>
<dbReference type="Pfam" id="PF01119">
    <property type="entry name" value="DNA_mis_repair"/>
    <property type="match status" value="1"/>
</dbReference>
<dbReference type="Pfam" id="PF13589">
    <property type="entry name" value="HATPase_c_3"/>
    <property type="match status" value="1"/>
</dbReference>
<dbReference type="Pfam" id="PF08676">
    <property type="entry name" value="MutL_C"/>
    <property type="match status" value="1"/>
</dbReference>
<dbReference type="SMART" id="SM01340">
    <property type="entry name" value="DNA_mis_repair"/>
    <property type="match status" value="1"/>
</dbReference>
<dbReference type="SMART" id="SM00853">
    <property type="entry name" value="MutL_C"/>
    <property type="match status" value="1"/>
</dbReference>
<dbReference type="SUPFAM" id="SSF55874">
    <property type="entry name" value="ATPase domain of HSP90 chaperone/DNA topoisomerase II/histidine kinase"/>
    <property type="match status" value="1"/>
</dbReference>
<dbReference type="SUPFAM" id="SSF118116">
    <property type="entry name" value="DNA mismatch repair protein MutL"/>
    <property type="match status" value="1"/>
</dbReference>
<dbReference type="SUPFAM" id="SSF54211">
    <property type="entry name" value="Ribosomal protein S5 domain 2-like"/>
    <property type="match status" value="1"/>
</dbReference>
<dbReference type="PROSITE" id="PS00058">
    <property type="entry name" value="DNA_MISMATCH_REPAIR_1"/>
    <property type="match status" value="1"/>
</dbReference>
<protein>
    <recommendedName>
        <fullName evidence="1">DNA mismatch repair protein MutL</fullName>
    </recommendedName>
</protein>
<comment type="function">
    <text evidence="1">This protein is involved in the repair of mismatches in DNA. It is required for dam-dependent methyl-directed DNA mismatch repair. May act as a 'molecular matchmaker', a protein that promotes the formation of a stable complex between two or more DNA-binding proteins in an ATP-dependent manner without itself being part of a final effector complex.</text>
</comment>
<comment type="similarity">
    <text evidence="1">Belongs to the DNA mismatch repair MutL/HexB family.</text>
</comment>
<reference key="1">
    <citation type="submission" date="2007-06" db="EMBL/GenBank/DDBJ databases">
        <authorList>
            <person name="Brinkac L.M."/>
            <person name="Daugherty S."/>
            <person name="Dodson R.J."/>
            <person name="Madupu R."/>
            <person name="Brown J.L."/>
            <person name="Bruce D."/>
            <person name="Detter C."/>
            <person name="Munk C."/>
            <person name="Smith L.A."/>
            <person name="Smith T.J."/>
            <person name="White O."/>
            <person name="Brettin T.S."/>
        </authorList>
    </citation>
    <scope>NUCLEOTIDE SEQUENCE [LARGE SCALE GENOMIC DNA]</scope>
    <source>
        <strain>Langeland / NCTC 10281 / Type F</strain>
    </source>
</reference>
<sequence length="666" mass="76229">MRKINLLDLETTNKIAAGEVIERPFSVVKELVENSIDAGAKNITIEIEDGGQKLIKIIDDGEGIYPIDIKNAFLPHATSKINSIEDIYKISTMGFRGEALASISSVSKTKLKSRVDSYNFGKEIYIEGGKIEYLKDTGCNVGTTIEVSDLFYNVPARLKFLKSARSDSSSISDIVNRFILAHPDISFNLINKGKQSIKSYGTGNLKDSIRCVYNKTISENLINFESHKDIISVYGFIGKPEISRKSRTNQSIFVNKRYVKSKFITAAVENAFKSFLTVNSYPFFVIFIDIFPEYIDVNVHPTKSEVKFKDERAMFKTIFDAVHGAIKGELKESFTNFFNKEDINIYDSEKSITEPIKLEKEEVQIPIDLNSNNKIDIFGNNINKLSNNTELLKNIGIKEKNTLENNNDFYTSKQNEIYYANKNDECLNSCNKDNYSKIEKSLQKDNKNPDTLYLNEHNTNSSSINIKENKPNNFYVDMKIIGQFNNTYILIEKDKELYIIDQHAAHEKVLFEKFKSEIENRYVISQILLSPVVIELSEDEFNIYEENKDIFKNSGFSVETFGEYTINIKEVPLILGKPNVENLFMDILYNLKNMKSKETSTIKYNAIATLACKSAVKANDNLKEEEIKKLIEDMLILNNPYTCPHGRPTMIKFTLKDLEKKFKRIQ</sequence>
<proteinExistence type="inferred from homology"/>
<name>MUTL_CLOBL</name>
<accession>A7GE44</accession>
<gene>
    <name evidence="1" type="primary">mutL</name>
    <name type="ordered locus">CLI_1794</name>
</gene>
<feature type="chain" id="PRO_1000010006" description="DNA mismatch repair protein MutL">
    <location>
        <begin position="1"/>
        <end position="666"/>
    </location>
</feature>
<evidence type="ECO:0000255" key="1">
    <source>
        <dbReference type="HAMAP-Rule" id="MF_00149"/>
    </source>
</evidence>